<evidence type="ECO:0000255" key="1">
    <source>
        <dbReference type="HAMAP-Rule" id="MF_01328"/>
    </source>
</evidence>
<evidence type="ECO:0000256" key="2">
    <source>
        <dbReference type="SAM" id="MobiDB-lite"/>
    </source>
</evidence>
<evidence type="ECO:0000305" key="3"/>
<gene>
    <name evidence="1" type="primary">rplD</name>
    <name type="ordered locus">LHK_00254</name>
</gene>
<protein>
    <recommendedName>
        <fullName evidence="1">Large ribosomal subunit protein uL4</fullName>
    </recommendedName>
    <alternativeName>
        <fullName evidence="3">50S ribosomal protein L4</fullName>
    </alternativeName>
</protein>
<name>RL4_LARHH</name>
<sequence>MELKVINQQGQAVESLQAAETLFGREYNEALVHQVVTAYLANARAGNRAQKDRSEINKSTKKPFRQKGTGRARAGRASSPLWRGGGKVFPNSPDENFSHKVNRKMFRAGMAAILSELLRSDRLVIIDDIKVDSPKTKEFAAKAKALGLENALVITGELDENLYLSSRNLSNVLVIEASQADPYSLVRFDKVVVTRDAVKQFEEQWA</sequence>
<keyword id="KW-1185">Reference proteome</keyword>
<keyword id="KW-0687">Ribonucleoprotein</keyword>
<keyword id="KW-0689">Ribosomal protein</keyword>
<keyword id="KW-0694">RNA-binding</keyword>
<keyword id="KW-0699">rRNA-binding</keyword>
<comment type="function">
    <text evidence="1">One of the primary rRNA binding proteins, this protein initially binds near the 5'-end of the 23S rRNA. It is important during the early stages of 50S assembly. It makes multiple contacts with different domains of the 23S rRNA in the assembled 50S subunit and ribosome.</text>
</comment>
<comment type="function">
    <text evidence="1">Forms part of the polypeptide exit tunnel.</text>
</comment>
<comment type="subunit">
    <text evidence="1">Part of the 50S ribosomal subunit.</text>
</comment>
<comment type="similarity">
    <text evidence="1">Belongs to the universal ribosomal protein uL4 family.</text>
</comment>
<feature type="chain" id="PRO_1000166011" description="Large ribosomal subunit protein uL4">
    <location>
        <begin position="1"/>
        <end position="206"/>
    </location>
</feature>
<feature type="region of interest" description="Disordered" evidence="2">
    <location>
        <begin position="47"/>
        <end position="94"/>
    </location>
</feature>
<feature type="compositionally biased region" description="Basic and acidic residues" evidence="2">
    <location>
        <begin position="49"/>
        <end position="58"/>
    </location>
</feature>
<feature type="compositionally biased region" description="Basic residues" evidence="2">
    <location>
        <begin position="59"/>
        <end position="74"/>
    </location>
</feature>
<accession>C1DAR8</accession>
<dbReference type="EMBL" id="CP001154">
    <property type="protein sequence ID" value="ACO73249.1"/>
    <property type="molecule type" value="Genomic_DNA"/>
</dbReference>
<dbReference type="RefSeq" id="WP_012695743.1">
    <property type="nucleotide sequence ID" value="NC_012559.1"/>
</dbReference>
<dbReference type="SMR" id="C1DAR8"/>
<dbReference type="STRING" id="557598.LHK_00254"/>
<dbReference type="GeneID" id="75109506"/>
<dbReference type="KEGG" id="lhk:LHK_00254"/>
<dbReference type="eggNOG" id="COG0088">
    <property type="taxonomic scope" value="Bacteria"/>
</dbReference>
<dbReference type="HOGENOM" id="CLU_041575_5_2_4"/>
<dbReference type="Proteomes" id="UP000002010">
    <property type="component" value="Chromosome"/>
</dbReference>
<dbReference type="GO" id="GO:1990904">
    <property type="term" value="C:ribonucleoprotein complex"/>
    <property type="evidence" value="ECO:0007669"/>
    <property type="project" value="UniProtKB-KW"/>
</dbReference>
<dbReference type="GO" id="GO:0005840">
    <property type="term" value="C:ribosome"/>
    <property type="evidence" value="ECO:0007669"/>
    <property type="project" value="UniProtKB-KW"/>
</dbReference>
<dbReference type="GO" id="GO:0019843">
    <property type="term" value="F:rRNA binding"/>
    <property type="evidence" value="ECO:0007669"/>
    <property type="project" value="UniProtKB-UniRule"/>
</dbReference>
<dbReference type="GO" id="GO:0003735">
    <property type="term" value="F:structural constituent of ribosome"/>
    <property type="evidence" value="ECO:0007669"/>
    <property type="project" value="InterPro"/>
</dbReference>
<dbReference type="GO" id="GO:0006412">
    <property type="term" value="P:translation"/>
    <property type="evidence" value="ECO:0007669"/>
    <property type="project" value="UniProtKB-UniRule"/>
</dbReference>
<dbReference type="Gene3D" id="3.40.1370.10">
    <property type="match status" value="1"/>
</dbReference>
<dbReference type="HAMAP" id="MF_01328_B">
    <property type="entry name" value="Ribosomal_uL4_B"/>
    <property type="match status" value="1"/>
</dbReference>
<dbReference type="InterPro" id="IPR002136">
    <property type="entry name" value="Ribosomal_uL4"/>
</dbReference>
<dbReference type="InterPro" id="IPR013005">
    <property type="entry name" value="Ribosomal_uL4-like"/>
</dbReference>
<dbReference type="InterPro" id="IPR023574">
    <property type="entry name" value="Ribosomal_uL4_dom_sf"/>
</dbReference>
<dbReference type="NCBIfam" id="TIGR03953">
    <property type="entry name" value="rplD_bact"/>
    <property type="match status" value="1"/>
</dbReference>
<dbReference type="PANTHER" id="PTHR10746">
    <property type="entry name" value="50S RIBOSOMAL PROTEIN L4"/>
    <property type="match status" value="1"/>
</dbReference>
<dbReference type="PANTHER" id="PTHR10746:SF6">
    <property type="entry name" value="LARGE RIBOSOMAL SUBUNIT PROTEIN UL4M"/>
    <property type="match status" value="1"/>
</dbReference>
<dbReference type="Pfam" id="PF00573">
    <property type="entry name" value="Ribosomal_L4"/>
    <property type="match status" value="1"/>
</dbReference>
<dbReference type="SUPFAM" id="SSF52166">
    <property type="entry name" value="Ribosomal protein L4"/>
    <property type="match status" value="1"/>
</dbReference>
<organism>
    <name type="scientific">Laribacter hongkongensis (strain HLHK9)</name>
    <dbReference type="NCBI Taxonomy" id="557598"/>
    <lineage>
        <taxon>Bacteria</taxon>
        <taxon>Pseudomonadati</taxon>
        <taxon>Pseudomonadota</taxon>
        <taxon>Betaproteobacteria</taxon>
        <taxon>Neisseriales</taxon>
        <taxon>Aquaspirillaceae</taxon>
        <taxon>Laribacter</taxon>
    </lineage>
</organism>
<proteinExistence type="inferred from homology"/>
<reference key="1">
    <citation type="journal article" date="2009" name="PLoS Genet.">
        <title>The complete genome and proteome of Laribacter hongkongensis reveal potential mechanisms for adaptations to different temperatures and habitats.</title>
        <authorList>
            <person name="Woo P.C.Y."/>
            <person name="Lau S.K.P."/>
            <person name="Tse H."/>
            <person name="Teng J.L.L."/>
            <person name="Curreem S.O."/>
            <person name="Tsang A.K.L."/>
            <person name="Fan R.Y.Y."/>
            <person name="Wong G.K.M."/>
            <person name="Huang Y."/>
            <person name="Loman N.J."/>
            <person name="Snyder L.A.S."/>
            <person name="Cai J.J."/>
            <person name="Huang J.-D."/>
            <person name="Mak W."/>
            <person name="Pallen M.J."/>
            <person name="Lok S."/>
            <person name="Yuen K.-Y."/>
        </authorList>
    </citation>
    <scope>NUCLEOTIDE SEQUENCE [LARGE SCALE GENOMIC DNA]</scope>
    <source>
        <strain>HLHK9</strain>
    </source>
</reference>